<reference key="1">
    <citation type="journal article" date="1991" name="Virology">
        <title>Nucleotide sequence of the bacteriophage P22 genes required for DNA packaging.</title>
        <authorList>
            <person name="Eppler K."/>
            <person name="Wyckoff E."/>
            <person name="Goates J."/>
            <person name="Parr R."/>
            <person name="Casjens S."/>
        </authorList>
    </citation>
    <scope>NUCLEOTIDE SEQUENCE [GENOMIC DNA]</scope>
    <scope>PROTEIN SEQUENCE OF 2-9</scope>
</reference>
<reference key="2">
    <citation type="journal article" date="2000" name="J. Bacteriol.">
        <title>Sequence of the genome of Salmonella bacteriophage P22.</title>
        <authorList>
            <person name="Vander Byl C.S."/>
            <person name="Kropinski A.M.B."/>
        </authorList>
    </citation>
    <scope>NUCLEOTIDE SEQUENCE [LARGE SCALE GENOMIC DNA]</scope>
</reference>
<reference key="3">
    <citation type="journal article" date="2003" name="J. Bacteriol.">
        <title>Corrected sequence of the bacteriophage P22 genome.</title>
        <authorList>
            <person name="Pedulla M.L."/>
            <person name="Ford M.E."/>
            <person name="Karthikeyan T."/>
            <person name="Houtz J.M."/>
            <person name="Hendrix R.W."/>
            <person name="Hatfull G.F."/>
            <person name="Poteete A.R."/>
            <person name="Gilcrease E.B."/>
            <person name="Winn-Stapley D.A."/>
            <person name="Casjens S.R."/>
        </authorList>
    </citation>
    <scope>NUCLEOTIDE SEQUENCE [LARGE SCALE GENOMIC DNA]</scope>
</reference>
<reference key="4">
    <citation type="journal article" date="2008" name="Appl. Environ. Microbiol.">
        <title>Bacteriophage P22 and Staphylococcus aureus attenuation on nonporous fomites as determined by plate assay and quantitative PCR.</title>
        <authorList>
            <person name="Masago Y."/>
            <person name="Shibata T."/>
            <person name="Rose J.B."/>
        </authorList>
    </citation>
    <scope>NUCLEOTIDE SEQUENCE [LARGE SCALE GENOMIC DNA]</scope>
    <source>
        <strain evidence="19">ATCC 19585-B1</strain>
        <strain evidence="16 18">MSU</strain>
    </source>
</reference>
<reference key="5">
    <citation type="submission" date="2008-03" db="EMBL/GenBank/DDBJ databases">
        <authorList>
            <person name="Masago Y."/>
            <person name="Fong T.T."/>
            <person name="Rose J.B."/>
        </authorList>
    </citation>
    <scope>NUCLEOTIDE SEQUENCE [LARGE SCALE GENOMIC DNA]</scope>
    <source>
        <strain evidence="17">ATCC 19585-B1</strain>
    </source>
</reference>
<reference key="6">
    <citation type="journal article" date="1998" name="J. Mol. Biol.">
        <title>Functional domains of bacteriophage P22 scaffolding protein.</title>
        <authorList>
            <person name="Parker M.H."/>
            <person name="Casjens S."/>
            <person name="Prevelige P.E. Jr."/>
        </authorList>
    </citation>
    <scope>INTERACTION WITH THE SCAFFOLDING PROTEIN</scope>
</reference>
<reference key="7">
    <citation type="journal article" date="1998" name="Virology">
        <title>Electrostatic interactions drive scaffolding/coat protein binding and procapsid maturation in bacteriophage P22.</title>
        <authorList>
            <person name="Parker M.H."/>
            <person name="Prevelige P.E. Jr."/>
        </authorList>
    </citation>
    <scope>INTERACTION WITH THE SCAFFOLDING PROTEIN</scope>
</reference>
<reference key="8">
    <citation type="journal article" date="2000" name="J. Mol. Biol.">
        <title>Structure of the coat protein-binding domain of the scaffolding protein from a double-stranded DNA virus.</title>
        <authorList>
            <person name="Sun Y."/>
            <person name="Parker M.H."/>
            <person name="Weigele P."/>
            <person name="Casjens S."/>
            <person name="Prevelige P.E."/>
            <person name="Krishna N.R."/>
        </authorList>
    </citation>
    <scope>INTERACTION WITH THE SCAFFOLDING PROTEIN</scope>
</reference>
<reference key="9">
    <citation type="journal article" date="2013" name="J. Biol. Chem.">
        <title>An intramolecular chaperone inserted in bacteriophage P22 coat protein mediates its chaperonin-independent folding.</title>
        <authorList>
            <person name="Suhanovsky M.M."/>
            <person name="Teschke C.M."/>
        </authorList>
    </citation>
    <scope>DOMAIN</scope>
</reference>
<reference key="10">
    <citation type="journal article" date="2014" name="J. Virol.">
        <title>Highly specific salt bridges govern bacteriophage P22 icosahedral capsid assembly: identification of the site in coat protein responsible for interaction with scaffolding protein.</title>
        <authorList>
            <person name="Cortines J.R."/>
            <person name="Motwani T."/>
            <person name="Vyas A.A."/>
            <person name="Teschke C.M."/>
        </authorList>
    </citation>
    <scope>INTERACTION WITH THE SCAFFOLDING PROTEIN</scope>
    <scope>MUTAGENESIS OF GLU-5; ASP-14; GLU-15; GLU-18; LYS-377 AND ASP-385</scope>
</reference>
<reference key="11">
    <citation type="journal article" date="2015" name="J. Virol.">
        <title>A Molecular Staple: D-Loops in the I Domain of Bacteriophage P22 Coat Protein Make Important Intercapsomer Contacts Required for Procapsid Assembly.</title>
        <authorList>
            <person name="D'Lima N.G."/>
            <person name="Teschke C.M."/>
        </authorList>
    </citation>
    <scope>MUTAGENESIS OF TRP-241; GLN-242; LEU-243; ASP-244; ASN-245; ASP-246; LYS-249 AND ASN-251</scope>
</reference>
<reference key="12">
    <citation type="journal article" date="2019" name="J. Virol.">
        <title>A Hydrophobic Network: Intersubunit and Intercapsomer Interactions Stabilizing the Bacteriophage P22 Capsid.</title>
        <authorList>
            <person name="Asija K."/>
            <person name="Teschke C.M."/>
        </authorList>
    </citation>
    <scope>MUTAGENESIS OF TRP-61</scope>
    <scope>FUNCTION</scope>
</reference>
<reference evidence="23 24" key="13">
    <citation type="journal article" date="2010" name="Structure">
        <title>P22 coat protein structures reveal a novel mechanism for capsid maturation: stability without auxiliary proteins or chemical crosslinks.</title>
        <authorList>
            <person name="Parent K.N."/>
            <person name="Khayat R."/>
            <person name="Tu L.H."/>
            <person name="Suhanovsky M.M."/>
            <person name="Cortines J.R."/>
            <person name="Teschke C.M."/>
            <person name="Johnson J.E."/>
            <person name="Baker T.S."/>
        </authorList>
    </citation>
    <scope>STRUCTURE BY ELECTRON MICROSCOPY (8.20 ANGSTROMS)</scope>
    <scope>SUBCELLULAR LOCATION</scope>
</reference>
<reference evidence="21 22" key="14">
    <citation type="journal article" date="2011" name="Proc. Natl. Acad. Sci. U.S.A.">
        <title>Structural basis for scaffolding-mediated assembly and maturation of a dsDNA virus.</title>
        <authorList>
            <person name="Chen D.H."/>
            <person name="Baker M.L."/>
            <person name="Hryc C.F."/>
            <person name="DiMaio F."/>
            <person name="Jakana J."/>
            <person name="Wu W."/>
            <person name="Dougherty M."/>
            <person name="Haase-Pettingell C."/>
            <person name="Schmid M.F."/>
            <person name="Jiang W."/>
            <person name="Baker D."/>
            <person name="King J.A."/>
            <person name="Chiu W."/>
        </authorList>
    </citation>
    <scope>STRUCTURE BY ELECTRON MICROSCOPY (3.80 ANGSTROMS)</scope>
    <scope>FUNCTION</scope>
</reference>
<reference evidence="20" key="15">
    <citation type="journal article" date="2014" name="Structure">
        <title>Multiple functional roles of the accessory I-domain of bacteriophage P22 coat protein revealed by NMR structure and CryoEM modeling.</title>
        <authorList>
            <person name="Rizzo A.A."/>
            <person name="Suhanovsky M.M."/>
            <person name="Baker M.L."/>
            <person name="Fraser L.C."/>
            <person name="Jones L.M."/>
            <person name="Rempel D.L."/>
            <person name="Gross M.L."/>
            <person name="Chiu W."/>
            <person name="Alexandrescu A.T."/>
            <person name="Teschke C.M."/>
        </authorList>
    </citation>
    <scope>STRUCTURE BY NMR OF 223-345</scope>
    <scope>SUBCELLULAR LOCATION</scope>
    <scope>DOMAIN</scope>
</reference>
<reference evidence="25" key="16">
    <citation type="journal article" date="2017" name="Proc. Natl. Acad. Sci. U.S.A.">
        <title>Accurate model annotation of a near-atomic resolution cryo-EM map.</title>
        <authorList>
            <person name="Hryc C.F."/>
            <person name="Chen D.H."/>
            <person name="Afonine P.V."/>
            <person name="Jakana J."/>
            <person name="Wang Z."/>
            <person name="Haase-Pettingell C."/>
            <person name="Jiang W."/>
            <person name="Adams P.D."/>
            <person name="King J.A."/>
            <person name="Schmid M.F."/>
            <person name="Chiu W."/>
        </authorList>
    </citation>
    <scope>STRUCTURE BY ELECTRON MICROSCOPY (3.30 ANGSTROMS)</scope>
</reference>
<reference evidence="29 30" key="17">
    <citation type="journal article" date="2023" name="J. Mol. Biol.">
        <title>Molecular Architecture of Salmonella Typhimurium Virus P22 Genome Ejection Machinery.</title>
        <authorList>
            <person name="Iglesias S.M."/>
            <person name="Lokareddy R.K."/>
            <person name="Yang R."/>
            <person name="Li F."/>
            <person name="Yeggoni D.P."/>
            <person name="David Hou C.F."/>
            <person name="Leroux M.N."/>
            <person name="Cortines J.R."/>
            <person name="Leavitt J.C."/>
            <person name="Bird M."/>
            <person name="Casjens S.R."/>
            <person name="White S."/>
            <person name="Teschke C.M."/>
            <person name="Cingolani G."/>
        </authorList>
    </citation>
    <scope>STRUCTURE BY ELECTRON MICROSCOPY (3.10 ANGSTROMS)</scope>
    <scope>INTERACTION WITH THE PORTAL PROTEIN</scope>
</reference>
<reference evidence="27 28" key="18">
    <citation type="journal article" date="2023" name="Viruses">
        <title>Assembly and Capsid Expansion Mechanism of Bacteriophage P22 Revealed by High-Resolution Cryo-EM Structures.</title>
        <authorList>
            <person name="Xiao H."/>
            <person name="Zhou J."/>
            <person name="Yang F."/>
            <person name="Liu Z."/>
            <person name="Song J."/>
            <person name="Chen W."/>
            <person name="Liu H."/>
            <person name="Cheng L."/>
        </authorList>
    </citation>
    <scope>STRUCTURE BY ELECTRON MICROSCOPY (2.60 ANGSTROMS)</scope>
    <scope>INTERACTION WITH THE SCAFFOLDING PROTEIN</scope>
</reference>
<reference evidence="26" key="19">
    <citation type="journal article" date="2024" name="Adv. Healthc. Mater.">
        <title>A pH-Responsive Virus-Like Particle as a Protein Cage for a Targeted Delivery.</title>
        <authorList>
            <person name="Kim K.J."/>
            <person name="Kim G."/>
            <person name="Bae J.H."/>
            <person name="Song J.J."/>
            <person name="Kim H.S."/>
        </authorList>
    </citation>
    <scope>STRUCTURE BY ELECTRON MICROSCOPY (4.02 ANGSTROMS) OF 4-428</scope>
</reference>
<organism>
    <name type="scientific">Salmonella phage P22</name>
    <name type="common">Bacteriophage P22</name>
    <dbReference type="NCBI Taxonomy" id="10754"/>
    <lineage>
        <taxon>Viruses</taxon>
        <taxon>Duplodnaviria</taxon>
        <taxon>Heunggongvirae</taxon>
        <taxon>Uroviricota</taxon>
        <taxon>Caudoviricetes</taxon>
        <taxon>Lederbergvirus</taxon>
    </lineage>
</organism>
<evidence type="ECO:0000269" key="1">
    <source>
    </source>
</evidence>
<evidence type="ECO:0000269" key="2">
    <source>
    </source>
</evidence>
<evidence type="ECO:0000269" key="3">
    <source>
    </source>
</evidence>
<evidence type="ECO:0000269" key="4">
    <source>
    </source>
</evidence>
<evidence type="ECO:0000269" key="5">
    <source>
    </source>
</evidence>
<evidence type="ECO:0000269" key="6">
    <source>
    </source>
</evidence>
<evidence type="ECO:0000269" key="7">
    <source>
    </source>
</evidence>
<evidence type="ECO:0000269" key="8">
    <source>
    </source>
</evidence>
<evidence type="ECO:0000269" key="9">
    <source>
    </source>
</evidence>
<evidence type="ECO:0000269" key="10">
    <source>
    </source>
</evidence>
<evidence type="ECO:0000269" key="11">
    <source>
    </source>
</evidence>
<evidence type="ECO:0000269" key="12">
    <source>
    </source>
</evidence>
<evidence type="ECO:0000269" key="13">
    <source>
    </source>
</evidence>
<evidence type="ECO:0000305" key="14"/>
<evidence type="ECO:0000305" key="15">
    <source>
    </source>
</evidence>
<evidence type="ECO:0000312" key="16">
    <source>
        <dbReference type="EMBL" id="BAF80720.1"/>
    </source>
</evidence>
<evidence type="ECO:0000312" key="17">
    <source>
        <dbReference type="EMBL" id="BAG12603.1"/>
    </source>
</evidence>
<evidence type="ECO:0000312" key="18">
    <source>
        <dbReference type="Proteomes" id="UP000001315"/>
    </source>
</evidence>
<evidence type="ECO:0000312" key="19">
    <source>
        <dbReference type="Proteomes" id="UP000002165"/>
    </source>
</evidence>
<evidence type="ECO:0007744" key="20">
    <source>
        <dbReference type="PDB" id="2M5S"/>
    </source>
</evidence>
<evidence type="ECO:0007744" key="21">
    <source>
        <dbReference type="PDB" id="2XYY"/>
    </source>
</evidence>
<evidence type="ECO:0007744" key="22">
    <source>
        <dbReference type="PDB" id="2XYZ"/>
    </source>
</evidence>
<evidence type="ECO:0007744" key="23">
    <source>
        <dbReference type="PDB" id="3IYH"/>
    </source>
</evidence>
<evidence type="ECO:0007744" key="24">
    <source>
        <dbReference type="PDB" id="3IYI"/>
    </source>
</evidence>
<evidence type="ECO:0007744" key="25">
    <source>
        <dbReference type="PDB" id="5UU5"/>
    </source>
</evidence>
<evidence type="ECO:0007744" key="26">
    <source>
        <dbReference type="PDB" id="8GN5"/>
    </source>
</evidence>
<evidence type="ECO:0007744" key="27">
    <source>
        <dbReference type="PDB" id="8I1T"/>
    </source>
</evidence>
<evidence type="ECO:0007744" key="28">
    <source>
        <dbReference type="PDB" id="8I1V"/>
    </source>
</evidence>
<evidence type="ECO:0007744" key="29">
    <source>
        <dbReference type="PDB" id="8U10"/>
    </source>
</evidence>
<evidence type="ECO:0007744" key="30">
    <source>
        <dbReference type="PDB" id="8U11"/>
    </source>
</evidence>
<evidence type="ECO:0007829" key="31">
    <source>
        <dbReference type="PDB" id="2M5S"/>
    </source>
</evidence>
<evidence type="ECO:0007829" key="32">
    <source>
        <dbReference type="PDB" id="5UU5"/>
    </source>
</evidence>
<evidence type="ECO:0007829" key="33">
    <source>
        <dbReference type="PDB" id="8I1T"/>
    </source>
</evidence>
<evidence type="ECO:0007829" key="34">
    <source>
        <dbReference type="PDB" id="8I1V"/>
    </source>
</evidence>
<dbReference type="EMBL" id="M59749">
    <property type="protein sequence ID" value="AAA72963.1"/>
    <property type="molecule type" value="Genomic_DNA"/>
</dbReference>
<dbReference type="EMBL" id="AF217253">
    <property type="protein sequence ID" value="AAF75047.1"/>
    <property type="molecule type" value="Genomic_DNA"/>
</dbReference>
<dbReference type="EMBL" id="BK000583">
    <property type="protein sequence ID" value="DAA00987.1"/>
    <property type="molecule type" value="Genomic_DNA"/>
</dbReference>
<dbReference type="EMBL" id="AF527608">
    <property type="protein sequence ID" value="AAM81389.1"/>
    <property type="molecule type" value="Genomic_DNA"/>
</dbReference>
<dbReference type="EMBL" id="AB362338">
    <property type="protein sequence ID" value="BAF80720.1"/>
    <property type="molecule type" value="Genomic_DNA"/>
</dbReference>
<dbReference type="EMBL" id="AB426868">
    <property type="protein sequence ID" value="BAG12603.1"/>
    <property type="molecule type" value="Genomic_DNA"/>
</dbReference>
<dbReference type="PIR" id="E40474">
    <property type="entry name" value="Z5BP22"/>
</dbReference>
<dbReference type="RefSeq" id="NP_059630.1">
    <property type="nucleotide sequence ID" value="NC_002371.2"/>
</dbReference>
<dbReference type="PDB" id="2M5S">
    <property type="method" value="NMR"/>
    <property type="chains" value="A=223-345"/>
</dbReference>
<dbReference type="PDB" id="2XYY">
    <property type="method" value="EM"/>
    <property type="resolution" value="3.80 A"/>
    <property type="chains" value="A/B/C/D/E/F/G=1-430"/>
</dbReference>
<dbReference type="PDB" id="2XYZ">
    <property type="method" value="EM"/>
    <property type="resolution" value="4.00 A"/>
    <property type="chains" value="A/B/C/D/E/F/G=1-430"/>
</dbReference>
<dbReference type="PDB" id="3IYH">
    <property type="method" value="EM"/>
    <property type="chains" value="A/B/C/D/E/F=1-430"/>
</dbReference>
<dbReference type="PDB" id="3IYI">
    <property type="method" value="EM"/>
    <property type="chains" value="A/B/C/D/E/F/G=1-430"/>
</dbReference>
<dbReference type="PDB" id="5UU5">
    <property type="method" value="EM"/>
    <property type="resolution" value="3.30 A"/>
    <property type="chains" value="A/B/C/D/E/F/G=1-430"/>
</dbReference>
<dbReference type="PDB" id="8GN5">
    <property type="method" value="EM"/>
    <property type="resolution" value="4.02 A"/>
    <property type="chains" value="A/B/C/D=4-428"/>
</dbReference>
<dbReference type="PDB" id="8I1T">
    <property type="method" value="EM"/>
    <property type="resolution" value="2.80 A"/>
    <property type="chains" value="A/B/C/D/E/F/G=1-430"/>
</dbReference>
<dbReference type="PDB" id="8I1V">
    <property type="method" value="EM"/>
    <property type="resolution" value="2.60 A"/>
    <property type="chains" value="A/B/C/D/E/F/G=1-430"/>
</dbReference>
<dbReference type="PDB" id="8U10">
    <property type="method" value="EM"/>
    <property type="resolution" value="3.20 A"/>
    <property type="chains" value="A/B/C/D/E/F/G/H/I/J=1-430"/>
</dbReference>
<dbReference type="PDB" id="8U11">
    <property type="method" value="EM"/>
    <property type="resolution" value="3.10 A"/>
    <property type="chains" value="A/B/C/D/E/F/G/H/I/J=1-430"/>
</dbReference>
<dbReference type="PDBsum" id="2M5S"/>
<dbReference type="PDBsum" id="2XYY"/>
<dbReference type="PDBsum" id="2XYZ"/>
<dbReference type="PDBsum" id="3IYH"/>
<dbReference type="PDBsum" id="3IYI"/>
<dbReference type="PDBsum" id="5UU5"/>
<dbReference type="PDBsum" id="8GN5"/>
<dbReference type="PDBsum" id="8I1T"/>
<dbReference type="PDBsum" id="8I1V"/>
<dbReference type="PDBsum" id="8U10"/>
<dbReference type="PDBsum" id="8U11"/>
<dbReference type="EMDB" id="EMD-34155"/>
<dbReference type="EMDB" id="EMD-35121"/>
<dbReference type="EMDB" id="EMD-35123"/>
<dbReference type="EMDB" id="EMD-41791"/>
<dbReference type="EMDB" id="EMD-41792"/>
<dbReference type="EMDB" id="EMD-8606"/>
<dbReference type="SMR" id="P26747"/>
<dbReference type="DIP" id="DIP-29111N"/>
<dbReference type="IntAct" id="P26747">
    <property type="interactions" value="1"/>
</dbReference>
<dbReference type="GeneID" id="1262831"/>
<dbReference type="KEGG" id="vg:1262831"/>
<dbReference type="OrthoDB" id="2282at10239"/>
<dbReference type="EvolutionaryTrace" id="P26747"/>
<dbReference type="Proteomes" id="UP000001315">
    <property type="component" value="Segment"/>
</dbReference>
<dbReference type="Proteomes" id="UP000001795">
    <property type="component" value="Segment"/>
</dbReference>
<dbReference type="Proteomes" id="UP000001796">
    <property type="component" value="Segment"/>
</dbReference>
<dbReference type="Proteomes" id="UP000002165">
    <property type="component" value="Segment"/>
</dbReference>
<dbReference type="Proteomes" id="UP000007960">
    <property type="component" value="Segment"/>
</dbReference>
<dbReference type="GO" id="GO:0039620">
    <property type="term" value="C:T=7 icosahedral viral capsid"/>
    <property type="evidence" value="ECO:0000314"/>
    <property type="project" value="UniProtKB"/>
</dbReference>
<dbReference type="GO" id="GO:0019028">
    <property type="term" value="C:viral capsid"/>
    <property type="evidence" value="ECO:0000314"/>
    <property type="project" value="CAFA"/>
</dbReference>
<dbReference type="GO" id="GO:0046729">
    <property type="term" value="C:viral procapsid"/>
    <property type="evidence" value="ECO:0000314"/>
    <property type="project" value="CAFA"/>
</dbReference>
<dbReference type="GO" id="GO:0042802">
    <property type="term" value="F:identical protein binding"/>
    <property type="evidence" value="ECO:0000314"/>
    <property type="project" value="CAFA"/>
</dbReference>
<dbReference type="GO" id="GO:0046797">
    <property type="term" value="P:viral procapsid maturation"/>
    <property type="evidence" value="ECO:0000314"/>
    <property type="project" value="CAFA"/>
</dbReference>
<dbReference type="Gene3D" id="2.40.30.240">
    <property type="match status" value="1"/>
</dbReference>
<dbReference type="InterPro" id="IPR024659">
    <property type="entry name" value="Phage_coat_Gp5"/>
</dbReference>
<dbReference type="Pfam" id="PF11651">
    <property type="entry name" value="P22_CoatProtein"/>
    <property type="match status" value="1"/>
</dbReference>
<name>CAPSD_BPP22</name>
<accession>P26747</accession>
<accession>A8CGC7</accession>
<accession>Q77D91</accession>
<accession>Q7PCI5</accession>
<protein>
    <recommendedName>
        <fullName evidence="14">Major capsid protein</fullName>
    </recommendedName>
    <alternativeName>
        <fullName evidence="14">Gene product 5</fullName>
        <shortName>gp5</shortName>
    </alternativeName>
    <alternativeName>
        <fullName evidence="14">Major head protein</fullName>
    </alternativeName>
</protein>
<feature type="initiator methionine" description="Removed; by host" evidence="2">
    <location>
        <position position="1"/>
    </location>
</feature>
<feature type="chain" id="PRO_0000077752" description="Major capsid protein">
    <location>
        <begin position="2"/>
        <end position="430"/>
    </location>
</feature>
<feature type="region of interest" description="Binding to the capsid assembly scaffolding protein" evidence="6">
    <location>
        <begin position="2"/>
        <end position="56"/>
    </location>
</feature>
<feature type="region of interest" description="I domain" evidence="5">
    <location>
        <begin position="223"/>
        <end position="345"/>
    </location>
</feature>
<feature type="site" description="Essential for binding to the capsid assembly scaffolding protein" evidence="6">
    <location>
        <position position="14"/>
    </location>
</feature>
<feature type="site" description="Involved in capsid stabilization and maturation" evidence="9">
    <location>
        <position position="61"/>
    </location>
</feature>
<feature type="mutagenesis site" description="Impaired phage growth; probable capsid protein misfolding." evidence="6">
    <original>E</original>
    <variation>A</variation>
    <location>
        <position position="5"/>
    </location>
</feature>
<feature type="mutagenesis site" description="Impaired phage growth; inability of the mutant capsid protein to interact properly with scaffolding protein." evidence="6">
    <original>D</original>
    <variation>A</variation>
    <location>
        <position position="14"/>
    </location>
</feature>
<feature type="mutagenesis site" description="Decreased phage growth." evidence="6">
    <original>E</original>
    <variation>A</variation>
    <location>
        <position position="15"/>
    </location>
</feature>
<feature type="mutagenesis site" description="Decreased phage growth." evidence="6">
    <original>E</original>
    <variation>A</variation>
    <location>
        <position position="18"/>
    </location>
</feature>
<feature type="mutagenesis site" description="Drastically decreases capsid stability." evidence="9">
    <original>W</original>
    <variation>N</variation>
    <variation>V</variation>
    <location>
        <position position="61"/>
    </location>
</feature>
<feature type="mutagenesis site" description="Cold-sensitive phenotype probably due to an assembly defect." evidence="8">
    <original>W</original>
    <variation>A</variation>
    <location>
        <position position="241"/>
    </location>
</feature>
<feature type="mutagenesis site" description="Cold-sensitive phenotype probably due to an assembly defect." evidence="8">
    <original>Q</original>
    <variation>A</variation>
    <location>
        <position position="242"/>
    </location>
</feature>
<feature type="mutagenesis site" description="No effect on phage production." evidence="8">
    <original>L</original>
    <variation>A</variation>
    <location>
        <position position="243"/>
    </location>
</feature>
<feature type="mutagenesis site" description="Lethal. Complete loss of procapsids assembly." evidence="8">
    <original>D</original>
    <variation>A</variation>
    <location>
        <position position="244"/>
    </location>
</feature>
<feature type="mutagenesis site" description="Slight decrease in phage production." evidence="8">
    <original>N</original>
    <variation>A</variation>
    <location>
        <position position="245"/>
    </location>
</feature>
<feature type="mutagenesis site" description="Lethal. Complete loss of procapsids assembly, assembles as tubes instead." evidence="8">
    <original>D</original>
    <variation>A</variation>
    <location>
        <position position="246"/>
    </location>
</feature>
<feature type="mutagenesis site" description="No effect on phage production." evidence="8">
    <original>K</original>
    <variation>A</variation>
    <location>
        <position position="249"/>
    </location>
</feature>
<feature type="mutagenesis site" description="Cold-sensitive phenotype probably due to an assembly defect." evidence="8">
    <original>N</original>
    <variation>A</variation>
    <location>
        <position position="251"/>
    </location>
</feature>
<feature type="mutagenesis site" description="No effect on phage growth." evidence="6">
    <original>K</original>
    <variation>A</variation>
    <location>
        <position position="377"/>
    </location>
</feature>
<feature type="mutagenesis site" description="No effect on phage growth." evidence="6">
    <original>D</original>
    <variation>A</variation>
    <location>
        <position position="385"/>
    </location>
</feature>
<feature type="helix" evidence="34">
    <location>
        <begin position="5"/>
        <end position="23"/>
    </location>
</feature>
<feature type="helix" evidence="34">
    <location>
        <begin position="26"/>
        <end position="29"/>
    </location>
</feature>
<feature type="strand" evidence="34">
    <location>
        <begin position="30"/>
        <end position="33"/>
    </location>
</feature>
<feature type="helix" evidence="33">
    <location>
        <begin position="37"/>
        <end position="42"/>
    </location>
</feature>
<feature type="turn" evidence="33">
    <location>
        <begin position="43"/>
        <end position="45"/>
    </location>
</feature>
<feature type="strand" evidence="34">
    <location>
        <begin position="46"/>
        <end position="51"/>
    </location>
</feature>
<feature type="strand" evidence="34">
    <location>
        <begin position="73"/>
        <end position="77"/>
    </location>
</feature>
<feature type="strand" evidence="34">
    <location>
        <begin position="83"/>
        <end position="89"/>
    </location>
</feature>
<feature type="turn" evidence="34">
    <location>
        <begin position="91"/>
        <end position="94"/>
    </location>
</feature>
<feature type="helix" evidence="34">
    <location>
        <begin position="97"/>
        <end position="126"/>
    </location>
</feature>
<feature type="strand" evidence="34">
    <location>
        <begin position="129"/>
        <end position="131"/>
    </location>
</feature>
<feature type="strand" evidence="34">
    <location>
        <begin position="134"/>
        <end position="137"/>
    </location>
</feature>
<feature type="strand" evidence="34">
    <location>
        <begin position="141"/>
        <end position="145"/>
    </location>
</feature>
<feature type="helix" evidence="34">
    <location>
        <begin position="147"/>
        <end position="158"/>
    </location>
</feature>
<feature type="strand" evidence="34">
    <location>
        <begin position="162"/>
        <end position="164"/>
    </location>
</feature>
<feature type="strand" evidence="34">
    <location>
        <begin position="167"/>
        <end position="170"/>
    </location>
</feature>
<feature type="helix" evidence="34">
    <location>
        <begin position="172"/>
        <end position="177"/>
    </location>
</feature>
<feature type="helix" evidence="32">
    <location>
        <begin position="183"/>
        <end position="185"/>
    </location>
</feature>
<feature type="helix" evidence="33">
    <location>
        <begin position="193"/>
        <end position="198"/>
    </location>
</feature>
<feature type="strand" evidence="32">
    <location>
        <begin position="200"/>
        <end position="204"/>
    </location>
</feature>
<feature type="strand" evidence="34">
    <location>
        <begin position="205"/>
        <end position="207"/>
    </location>
</feature>
<feature type="strand" evidence="34">
    <location>
        <begin position="210"/>
        <end position="213"/>
    </location>
</feature>
<feature type="strand" evidence="33">
    <location>
        <begin position="227"/>
        <end position="230"/>
    </location>
</feature>
<feature type="strand" evidence="34">
    <location>
        <begin position="240"/>
        <end position="243"/>
    </location>
</feature>
<feature type="strand" evidence="34">
    <location>
        <begin position="249"/>
        <end position="251"/>
    </location>
</feature>
<feature type="strand" evidence="33">
    <location>
        <begin position="253"/>
        <end position="255"/>
    </location>
</feature>
<feature type="strand" evidence="34">
    <location>
        <begin position="257"/>
        <end position="262"/>
    </location>
</feature>
<feature type="strand" evidence="31">
    <location>
        <begin position="272"/>
        <end position="275"/>
    </location>
</feature>
<feature type="strand" evidence="34">
    <location>
        <begin position="279"/>
        <end position="281"/>
    </location>
</feature>
<feature type="turn" evidence="34">
    <location>
        <begin position="283"/>
        <end position="285"/>
    </location>
</feature>
<feature type="strand" evidence="34">
    <location>
        <begin position="288"/>
        <end position="292"/>
    </location>
</feature>
<feature type="strand" evidence="34">
    <location>
        <begin position="295"/>
        <end position="299"/>
    </location>
</feature>
<feature type="strand" evidence="34">
    <location>
        <begin position="302"/>
        <end position="310"/>
    </location>
</feature>
<feature type="strand" evidence="34">
    <location>
        <begin position="314"/>
        <end position="316"/>
    </location>
</feature>
<feature type="strand" evidence="34">
    <location>
        <begin position="318"/>
        <end position="320"/>
    </location>
</feature>
<feature type="helix" evidence="34">
    <location>
        <begin position="322"/>
        <end position="325"/>
    </location>
</feature>
<feature type="strand" evidence="34">
    <location>
        <begin position="330"/>
        <end position="332"/>
    </location>
</feature>
<feature type="strand" evidence="33">
    <location>
        <begin position="339"/>
        <end position="342"/>
    </location>
</feature>
<feature type="strand" evidence="34">
    <location>
        <begin position="351"/>
        <end position="354"/>
    </location>
</feature>
<feature type="strand" evidence="34">
    <location>
        <begin position="360"/>
        <end position="362"/>
    </location>
</feature>
<feature type="strand" evidence="34">
    <location>
        <begin position="371"/>
        <end position="373"/>
    </location>
</feature>
<feature type="strand" evidence="34">
    <location>
        <begin position="376"/>
        <end position="383"/>
    </location>
</feature>
<feature type="turn" evidence="34">
    <location>
        <begin position="384"/>
        <end position="387"/>
    </location>
</feature>
<feature type="strand" evidence="34">
    <location>
        <begin position="388"/>
        <end position="397"/>
    </location>
</feature>
<feature type="turn" evidence="34">
    <location>
        <begin position="398"/>
        <end position="401"/>
    </location>
</feature>
<feature type="strand" evidence="34">
    <location>
        <begin position="402"/>
        <end position="410"/>
    </location>
</feature>
<feature type="strand" evidence="34">
    <location>
        <begin position="412"/>
        <end position="414"/>
    </location>
</feature>
<feature type="helix" evidence="34">
    <location>
        <begin position="418"/>
        <end position="420"/>
    </location>
</feature>
<feature type="strand" evidence="34">
    <location>
        <begin position="421"/>
        <end position="424"/>
    </location>
</feature>
<gene>
    <name type="primary">5</name>
</gene>
<comment type="function">
    <text evidence="4 15">Self-assembles to form an icosahedral capsid with a T=7 symmetry.</text>
</comment>
<comment type="subunit">
    <text evidence="1 6 10 11 12 13">Interacts (via N-terminus) with the capsid assembly scaffolding protein (via C-terminus); capsid proteins and scaffolding proteins form building blocks that assemble to form the procapsid (PubMed:10764583, PubMed:24600011, PubMed:36851569, PubMed:9680476, PubMed:9792844). Interacts with the portal protein (PubMed:37952769).</text>
</comment>
<comment type="interaction">
    <interactant intactId="EBI-15582363">
        <id>P26747</id>
    </interactant>
    <interactant intactId="EBI-15582363">
        <id>P26747</id>
        <label>5</label>
    </interactant>
    <organismsDiffer>false</organismsDiffer>
    <experiments>2</experiments>
</comment>
<comment type="subcellular location">
    <subcellularLocation>
        <location evidence="3 7">Virion</location>
    </subcellularLocation>
    <text evidence="3 7">Forms the capsid icosahedric shell.</text>
</comment>
<comment type="domain">
    <text evidence="5 7">The insertion domain (I domain) plays an important role in the folding of the capsid protein by acting as an intramolecular chaperone.</text>
</comment>
<comment type="similarity">
    <text evidence="14">Belongs to the P22 phage major capsid protein family.</text>
</comment>
<sequence>MALNEGQIVTLAVDEIIETISAITPMAQKAKKYTPPAASMQRSSNTIWMPVEQESPTQEGWDLTDKATGLLELNVAVNMGEPDNDFFQLRADDLRDETAYRRRIQSAARKLANNVELKVANMAAEMGSLVITSPDAIGTNTADAWNFVADAEEIMFSRELNRDMGTSYFFNPQDYKKAGYDLTKRDIFGRIPEEAYRDGTIQRQVAGFDDVLRSPKLPVLTKSTATGITVSGAQSFKPVAWQLDNDGNKVNVDNRFATVTLSATTGMKRGDKISFAGVKFLGQMAKNVLAQDATFSVVRVVDGTHVEITPKPVALDDVSLSPEQRAYANVNTSLADAMAVNILNVKDARTNVFWADDAIRIVSQPIPANHELFAGMKTTSFSIPDVGLNGIFATQGDISTLSGLCRIALWYGVNATRPEAIGVGLPGQTA</sequence>
<proteinExistence type="evidence at protein level"/>
<keyword id="KW-0002">3D-structure</keyword>
<keyword id="KW-0167">Capsid protein</keyword>
<keyword id="KW-0903">Direct protein sequencing</keyword>
<keyword id="KW-0426">Late protein</keyword>
<keyword id="KW-1185">Reference proteome</keyword>
<keyword id="KW-1145">T=7 icosahedral capsid protein</keyword>
<keyword id="KW-0946">Virion</keyword>
<organismHost>
    <name type="scientific">Salmonella typhimurium</name>
    <dbReference type="NCBI Taxonomy" id="90371"/>
</organismHost>